<accession>Q20585</accession>
<keyword id="KW-0647">Proteasome</keyword>
<keyword id="KW-1185">Reference proteome</keyword>
<proteinExistence type="evidence at transcript level"/>
<gene>
    <name type="primary">rpn-7</name>
    <name type="ORF">F49C12.8</name>
</gene>
<sequence>MTEAAKKSTKKPVDDGNFDKEIISRWPDLELSQTRFMLNHPEVDSSVKEAKLEKLQETIKEFDMAPFYELVCADFKIVVDATQLAAMKAANQKKIDEITAEVEDAEKNLGESEVRQGLLRKFEYYCQIGDKDNALKAYTATYEKTVGMGYRIDVVFAMIRVGLFFLDHHLINKFITKAKELMEQGGDWERKNRLRSYEALYRMSVRDFAGAADLFLEAVPTFGSYELMTYENLILYTVITTTFALDRPDLRTKVIRCNEVQEQLTGGGLNGTLIPVREYLESYYDCHYDRFFIQLAALESERFKFDRYLSPHFNYYSRGMRHRAYEQFLTPYKTVRIDMMAKDFGVSRAFIDRELHRLIATGQLQCRIDAVNGVIEVNHRDSKNHLYKAVIKDGDILLNRIQKLARVINA</sequence>
<protein>
    <recommendedName>
        <fullName>26S proteasome non-ATPase regulatory subunit 6</fullName>
    </recommendedName>
    <alternativeName>
        <fullName>26S proteasome regulatory subunit rpn-7</fullName>
    </alternativeName>
</protein>
<dbReference type="EMBL" id="Z68227">
    <property type="protein sequence ID" value="CAA92512.1"/>
    <property type="molecule type" value="Genomic_DNA"/>
</dbReference>
<dbReference type="PIR" id="T22413">
    <property type="entry name" value="T22413"/>
</dbReference>
<dbReference type="RefSeq" id="NP_501632.1">
    <property type="nucleotide sequence ID" value="NM_069231.7"/>
</dbReference>
<dbReference type="SMR" id="Q20585"/>
<dbReference type="BioGRID" id="42859">
    <property type="interactions" value="48"/>
</dbReference>
<dbReference type="DIP" id="DIP-26993N"/>
<dbReference type="FunCoup" id="Q20585">
    <property type="interactions" value="2560"/>
</dbReference>
<dbReference type="IntAct" id="Q20585">
    <property type="interactions" value="2"/>
</dbReference>
<dbReference type="STRING" id="6239.F49C12.8.1"/>
<dbReference type="PaxDb" id="6239-F49C12.8"/>
<dbReference type="PeptideAtlas" id="Q20585"/>
<dbReference type="EnsemblMetazoa" id="F49C12.8.1">
    <property type="protein sequence ID" value="F49C12.8.1"/>
    <property type="gene ID" value="WBGene00004463"/>
</dbReference>
<dbReference type="EnsemblMetazoa" id="F49C12.8.2">
    <property type="protein sequence ID" value="F49C12.8.2"/>
    <property type="gene ID" value="WBGene00004463"/>
</dbReference>
<dbReference type="GeneID" id="177753"/>
<dbReference type="KEGG" id="cel:CELE_F49C12.8"/>
<dbReference type="UCSC" id="F49C12.8">
    <property type="organism name" value="c. elegans"/>
</dbReference>
<dbReference type="AGR" id="WB:WBGene00004463"/>
<dbReference type="CTD" id="177753"/>
<dbReference type="WormBase" id="F49C12.8">
    <property type="protein sequence ID" value="CE03368"/>
    <property type="gene ID" value="WBGene00004463"/>
    <property type="gene designation" value="rpn-7"/>
</dbReference>
<dbReference type="eggNOG" id="KOG0687">
    <property type="taxonomic scope" value="Eukaryota"/>
</dbReference>
<dbReference type="GeneTree" id="ENSGT00510000046608"/>
<dbReference type="HOGENOM" id="CLU_031814_0_0_1"/>
<dbReference type="InParanoid" id="Q20585"/>
<dbReference type="OMA" id="RLHCKVD"/>
<dbReference type="OrthoDB" id="1452at2759"/>
<dbReference type="PhylomeDB" id="Q20585"/>
<dbReference type="Reactome" id="R-CEL-1234176">
    <property type="pathway name" value="Oxygen-dependent proline hydroxylation of Hypoxia-inducible Factor Alpha"/>
</dbReference>
<dbReference type="Reactome" id="R-CEL-1236978">
    <property type="pathway name" value="Cross-presentation of soluble exogenous antigens (endosomes)"/>
</dbReference>
<dbReference type="Reactome" id="R-CEL-187577">
    <property type="pathway name" value="SCF(Skp2)-mediated degradation of p27/p21"/>
</dbReference>
<dbReference type="Reactome" id="R-CEL-195253">
    <property type="pathway name" value="Degradation of beta-catenin by the destruction complex"/>
</dbReference>
<dbReference type="Reactome" id="R-CEL-349425">
    <property type="pathway name" value="Autodegradation of the E3 ubiquitin ligase COP1"/>
</dbReference>
<dbReference type="Reactome" id="R-CEL-350562">
    <property type="pathway name" value="Regulation of ornithine decarboxylase (ODC)"/>
</dbReference>
<dbReference type="Reactome" id="R-CEL-382556">
    <property type="pathway name" value="ABC-family proteins mediated transport"/>
</dbReference>
<dbReference type="Reactome" id="R-CEL-4608870">
    <property type="pathway name" value="Asymmetric localization of PCP proteins"/>
</dbReference>
<dbReference type="Reactome" id="R-CEL-4641258">
    <property type="pathway name" value="Degradation of DVL"/>
</dbReference>
<dbReference type="Reactome" id="R-CEL-5632684">
    <property type="pathway name" value="Hedgehog 'on' state"/>
</dbReference>
<dbReference type="Reactome" id="R-CEL-5687128">
    <property type="pathway name" value="MAPK6/MAPK4 signaling"/>
</dbReference>
<dbReference type="Reactome" id="R-CEL-5689603">
    <property type="pathway name" value="UCH proteinases"/>
</dbReference>
<dbReference type="Reactome" id="R-CEL-5689880">
    <property type="pathway name" value="Ub-specific processing proteases"/>
</dbReference>
<dbReference type="Reactome" id="R-CEL-6798695">
    <property type="pathway name" value="Neutrophil degranulation"/>
</dbReference>
<dbReference type="Reactome" id="R-CEL-68949">
    <property type="pathway name" value="Orc1 removal from chromatin"/>
</dbReference>
<dbReference type="Reactome" id="R-CEL-69017">
    <property type="pathway name" value="CDK-mediated phosphorylation and removal of Cdc6"/>
</dbReference>
<dbReference type="Reactome" id="R-CEL-69601">
    <property type="pathway name" value="Ubiquitin Mediated Degradation of Phosphorylated Cdc25A"/>
</dbReference>
<dbReference type="Reactome" id="R-CEL-75815">
    <property type="pathway name" value="Ubiquitin-dependent degradation of Cyclin D"/>
</dbReference>
<dbReference type="Reactome" id="R-CEL-8854050">
    <property type="pathway name" value="FBXL7 down-regulates AURKA during mitotic entry and in early mitosis"/>
</dbReference>
<dbReference type="Reactome" id="R-CEL-8939902">
    <property type="pathway name" value="Regulation of RUNX2 expression and activity"/>
</dbReference>
<dbReference type="Reactome" id="R-CEL-8941858">
    <property type="pathway name" value="Regulation of RUNX3 expression and activity"/>
</dbReference>
<dbReference type="Reactome" id="R-CEL-8948751">
    <property type="pathway name" value="Regulation of PTEN stability and activity"/>
</dbReference>
<dbReference type="Reactome" id="R-CEL-8951664">
    <property type="pathway name" value="Neddylation"/>
</dbReference>
<dbReference type="Reactome" id="R-CEL-9755511">
    <property type="pathway name" value="KEAP1-NFE2L2 pathway"/>
</dbReference>
<dbReference type="Reactome" id="R-CEL-9762114">
    <property type="pathway name" value="GSK3B and BTRC:CUL1-mediated-degradation of NFE2L2"/>
</dbReference>
<dbReference type="Reactome" id="R-CEL-983168">
    <property type="pathway name" value="Antigen processing: Ubiquitination &amp; Proteasome degradation"/>
</dbReference>
<dbReference type="Reactome" id="R-CEL-9907900">
    <property type="pathway name" value="Proteasome assembly"/>
</dbReference>
<dbReference type="PRO" id="PR:Q20585"/>
<dbReference type="Proteomes" id="UP000001940">
    <property type="component" value="Chromosome IV"/>
</dbReference>
<dbReference type="Bgee" id="WBGene00004463">
    <property type="expression patterns" value="Expressed in germ line (C elegans) and 4 other cell types or tissues"/>
</dbReference>
<dbReference type="GO" id="GO:0005838">
    <property type="term" value="C:proteasome regulatory particle"/>
    <property type="evidence" value="ECO:0000318"/>
    <property type="project" value="GO_Central"/>
</dbReference>
<dbReference type="GO" id="GO:0043161">
    <property type="term" value="P:proteasome-mediated ubiquitin-dependent protein catabolic process"/>
    <property type="evidence" value="ECO:0000318"/>
    <property type="project" value="GO_Central"/>
</dbReference>
<dbReference type="FunFam" id="1.25.40.570:FF:000005">
    <property type="entry name" value="26S proteasome regulatory subunit N7"/>
    <property type="match status" value="1"/>
</dbReference>
<dbReference type="Gene3D" id="1.25.40.570">
    <property type="match status" value="1"/>
</dbReference>
<dbReference type="InterPro" id="IPR000717">
    <property type="entry name" value="PCI_dom"/>
</dbReference>
<dbReference type="InterPro" id="IPR019585">
    <property type="entry name" value="Rpn7/CSN1"/>
</dbReference>
<dbReference type="InterPro" id="IPR045135">
    <property type="entry name" value="Rpn7_N"/>
</dbReference>
<dbReference type="InterPro" id="IPR049549">
    <property type="entry name" value="RPN7_PSMD6_C"/>
</dbReference>
<dbReference type="InterPro" id="IPR036390">
    <property type="entry name" value="WH_DNA-bd_sf"/>
</dbReference>
<dbReference type="PANTHER" id="PTHR14145:SF1">
    <property type="entry name" value="26S PROTEASOME NON-ATPASE REGULATORY SUBUNIT 6"/>
    <property type="match status" value="1"/>
</dbReference>
<dbReference type="PANTHER" id="PTHR14145">
    <property type="entry name" value="26S PROTESOME SUBUNIT 6"/>
    <property type="match status" value="1"/>
</dbReference>
<dbReference type="Pfam" id="PF01399">
    <property type="entry name" value="PCI"/>
    <property type="match status" value="1"/>
</dbReference>
<dbReference type="Pfam" id="PF10602">
    <property type="entry name" value="RPN7"/>
    <property type="match status" value="1"/>
</dbReference>
<dbReference type="Pfam" id="PF21154">
    <property type="entry name" value="RPN7_PSMD6_C"/>
    <property type="match status" value="1"/>
</dbReference>
<dbReference type="SMART" id="SM00088">
    <property type="entry name" value="PINT"/>
    <property type="match status" value="1"/>
</dbReference>
<dbReference type="SUPFAM" id="SSF46785">
    <property type="entry name" value="Winged helix' DNA-binding domain"/>
    <property type="match status" value="1"/>
</dbReference>
<dbReference type="PROSITE" id="PS50250">
    <property type="entry name" value="PCI"/>
    <property type="match status" value="1"/>
</dbReference>
<reference key="1">
    <citation type="journal article" date="1998" name="Science">
        <title>Genome sequence of the nematode C. elegans: a platform for investigating biology.</title>
        <authorList>
            <consortium name="The C. elegans sequencing consortium"/>
        </authorList>
    </citation>
    <scope>NUCLEOTIDE SEQUENCE [LARGE SCALE GENOMIC DNA]</scope>
    <source>
        <strain>Bristol N2</strain>
    </source>
</reference>
<reference key="2">
    <citation type="journal article" date="2016" name="PLoS Genet.">
        <title>Graded proteasome dysfunction in Caenorhabditis elegans activates an adaptive response involving the conserved skn-1 and elt-2 transcription factors and the autophagy-lysosome pathway.</title>
        <authorList>
            <person name="Keith S.A."/>
            <person name="Maddux S.K."/>
            <person name="Zhong Y."/>
            <person name="Chinchankar M.N."/>
            <person name="Ferguson A.A."/>
            <person name="Ghazi A."/>
            <person name="Fisher A.L."/>
        </authorList>
    </citation>
    <scope>TISSUE SPECIFICITY</scope>
</reference>
<comment type="function">
    <text evidence="1">Acts as a regulatory subunit of the 26S proteasome which is involved in the ATP-dependent degradation of ubiquitinated proteins.</text>
</comment>
<comment type="tissue specificity">
    <text evidence="3">Expressed in multiple tissues including the intestine, pharynx and hypodermis.</text>
</comment>
<comment type="similarity">
    <text evidence="4">Belongs to the proteasome subunit S10 family.</text>
</comment>
<feature type="chain" id="PRO_0000173840" description="26S proteasome non-ATPase regulatory subunit 6">
    <location>
        <begin position="1"/>
        <end position="410"/>
    </location>
</feature>
<feature type="domain" description="PCI" evidence="2">
    <location>
        <begin position="207"/>
        <end position="382"/>
    </location>
</feature>
<evidence type="ECO:0000250" key="1"/>
<evidence type="ECO:0000255" key="2">
    <source>
        <dbReference type="PROSITE-ProRule" id="PRU01185"/>
    </source>
</evidence>
<evidence type="ECO:0000269" key="3">
    <source>
    </source>
</evidence>
<evidence type="ECO:0000305" key="4"/>
<name>PSMD6_CAEEL</name>
<organism>
    <name type="scientific">Caenorhabditis elegans</name>
    <dbReference type="NCBI Taxonomy" id="6239"/>
    <lineage>
        <taxon>Eukaryota</taxon>
        <taxon>Metazoa</taxon>
        <taxon>Ecdysozoa</taxon>
        <taxon>Nematoda</taxon>
        <taxon>Chromadorea</taxon>
        <taxon>Rhabditida</taxon>
        <taxon>Rhabditina</taxon>
        <taxon>Rhabditomorpha</taxon>
        <taxon>Rhabditoidea</taxon>
        <taxon>Rhabditidae</taxon>
        <taxon>Peloderinae</taxon>
        <taxon>Caenorhabditis</taxon>
    </lineage>
</organism>